<proteinExistence type="evidence at transcript level"/>
<comment type="subcellular location">
    <subcellularLocation>
        <location evidence="1">Secreted</location>
    </subcellularLocation>
</comment>
<comment type="similarity">
    <text evidence="3">Belongs to the DEFL family.</text>
</comment>
<comment type="caution">
    <text evidence="3">Lacks 1 of the 4 disulfide bonds, which are conserved features of the family.</text>
</comment>
<feature type="signal peptide" evidence="2">
    <location>
        <begin position="1"/>
        <end position="19"/>
    </location>
</feature>
<feature type="chain" id="PRO_0000379712" description="Defensin-like protein 220">
    <location>
        <begin position="20"/>
        <end position="91"/>
    </location>
</feature>
<feature type="disulfide bond" evidence="1">
    <location>
        <begin position="61"/>
        <end position="78"/>
    </location>
</feature>
<feature type="disulfide bond" evidence="1">
    <location>
        <begin position="64"/>
        <end position="83"/>
    </location>
</feature>
<feature type="disulfide bond" evidence="1">
    <location>
        <begin position="68"/>
        <end position="85"/>
    </location>
</feature>
<organism>
    <name type="scientific">Arabidopsis thaliana</name>
    <name type="common">Mouse-ear cress</name>
    <dbReference type="NCBI Taxonomy" id="3702"/>
    <lineage>
        <taxon>Eukaryota</taxon>
        <taxon>Viridiplantae</taxon>
        <taxon>Streptophyta</taxon>
        <taxon>Embryophyta</taxon>
        <taxon>Tracheophyta</taxon>
        <taxon>Spermatophyta</taxon>
        <taxon>Magnoliopsida</taxon>
        <taxon>eudicotyledons</taxon>
        <taxon>Gunneridae</taxon>
        <taxon>Pentapetalae</taxon>
        <taxon>rosids</taxon>
        <taxon>malvids</taxon>
        <taxon>Brassicales</taxon>
        <taxon>Brassicaceae</taxon>
        <taxon>Camelineae</taxon>
        <taxon>Arabidopsis</taxon>
    </lineage>
</organism>
<reference key="1">
    <citation type="journal article" date="1998" name="DNA Res.">
        <title>Structural analysis of Arabidopsis thaliana chromosome 5. VII. Sequence features of the regions of 1,013,767 bp covered by sixteen physically assigned P1 and TAC clones.</title>
        <authorList>
            <person name="Nakamura Y."/>
            <person name="Sato S."/>
            <person name="Asamizu E."/>
            <person name="Kaneko T."/>
            <person name="Kotani H."/>
            <person name="Miyajima N."/>
            <person name="Tabata S."/>
        </authorList>
    </citation>
    <scope>NUCLEOTIDE SEQUENCE [LARGE SCALE GENOMIC DNA]</scope>
    <source>
        <strain>cv. Columbia</strain>
    </source>
</reference>
<reference key="2">
    <citation type="journal article" date="2017" name="Plant J.">
        <title>Araport11: a complete reannotation of the Arabidopsis thaliana reference genome.</title>
        <authorList>
            <person name="Cheng C.Y."/>
            <person name="Krishnakumar V."/>
            <person name="Chan A.P."/>
            <person name="Thibaud-Nissen F."/>
            <person name="Schobel S."/>
            <person name="Town C.D."/>
        </authorList>
    </citation>
    <scope>GENOME REANNOTATION</scope>
    <source>
        <strain>cv. Columbia</strain>
    </source>
</reference>
<reference key="3">
    <citation type="journal article" date="2005" name="Plant Physiol.">
        <title>Genome organization of more than 300 defensin-like genes in Arabidopsis.</title>
        <authorList>
            <person name="Silverstein K.A.T."/>
            <person name="Graham M.A."/>
            <person name="Paape T.D."/>
            <person name="VandenBosch K.A."/>
        </authorList>
    </citation>
    <scope>GENE FAMILY</scope>
</reference>
<evidence type="ECO:0000250" key="1"/>
<evidence type="ECO:0000255" key="2"/>
<evidence type="ECO:0000305" key="3"/>
<accession>Q2V304</accession>
<sequence length="91" mass="10250">MKTIFFFITFIVLVSSCTSNIMTKSISQVKSQFFSPALSPNVDPADEHIGHSPDDMKIIFCQQCAFHCIEKKKNIGNCENSICRCTLEDIL</sequence>
<gene>
    <name type="ordered locus">At5g48605</name>
    <name type="ORF">K15N18</name>
</gene>
<dbReference type="EMBL" id="AB015468">
    <property type="status" value="NOT_ANNOTATED_CDS"/>
    <property type="molecule type" value="Genomic_DNA"/>
</dbReference>
<dbReference type="EMBL" id="CP002688">
    <property type="protein sequence ID" value="AED95696.1"/>
    <property type="molecule type" value="Genomic_DNA"/>
</dbReference>
<dbReference type="RefSeq" id="NP_001032036.1">
    <property type="nucleotide sequence ID" value="NM_001036959.2"/>
</dbReference>
<dbReference type="SMR" id="Q2V304"/>
<dbReference type="STRING" id="3702.Q2V304"/>
<dbReference type="PaxDb" id="3702-AT5G48605.1"/>
<dbReference type="ProteomicsDB" id="224196"/>
<dbReference type="EnsemblPlants" id="AT5G48605.1">
    <property type="protein sequence ID" value="AT5G48605.1"/>
    <property type="gene ID" value="AT5G48605"/>
</dbReference>
<dbReference type="GeneID" id="3771466"/>
<dbReference type="Gramene" id="AT5G48605.1">
    <property type="protein sequence ID" value="AT5G48605.1"/>
    <property type="gene ID" value="AT5G48605"/>
</dbReference>
<dbReference type="KEGG" id="ath:AT5G48605"/>
<dbReference type="Araport" id="AT5G48605"/>
<dbReference type="TAIR" id="AT5G48605"/>
<dbReference type="HOGENOM" id="CLU_180309_0_0_1"/>
<dbReference type="InParanoid" id="Q2V304"/>
<dbReference type="OMA" id="CENFICR"/>
<dbReference type="PhylomeDB" id="Q2V304"/>
<dbReference type="PRO" id="PR:Q2V304"/>
<dbReference type="Proteomes" id="UP000006548">
    <property type="component" value="Chromosome 5"/>
</dbReference>
<dbReference type="ExpressionAtlas" id="Q2V304">
    <property type="expression patterns" value="baseline"/>
</dbReference>
<dbReference type="GO" id="GO:0005576">
    <property type="term" value="C:extracellular region"/>
    <property type="evidence" value="ECO:0007669"/>
    <property type="project" value="UniProtKB-SubCell"/>
</dbReference>
<dbReference type="GO" id="GO:0050832">
    <property type="term" value="P:defense response to fungus"/>
    <property type="evidence" value="ECO:0007669"/>
    <property type="project" value="UniProtKB-KW"/>
</dbReference>
<dbReference type="GO" id="GO:0031640">
    <property type="term" value="P:killing of cells of another organism"/>
    <property type="evidence" value="ECO:0007669"/>
    <property type="project" value="UniProtKB-KW"/>
</dbReference>
<protein>
    <recommendedName>
        <fullName>Defensin-like protein 220</fullName>
    </recommendedName>
</protein>
<keyword id="KW-0929">Antimicrobial</keyword>
<keyword id="KW-1015">Disulfide bond</keyword>
<keyword id="KW-0295">Fungicide</keyword>
<keyword id="KW-0611">Plant defense</keyword>
<keyword id="KW-1185">Reference proteome</keyword>
<keyword id="KW-0964">Secreted</keyword>
<keyword id="KW-0732">Signal</keyword>
<name>DF220_ARATH</name>